<evidence type="ECO:0000255" key="1">
    <source>
        <dbReference type="HAMAP-Rule" id="MF_01323"/>
    </source>
</evidence>
<organism>
    <name type="scientific">Acaryochloris marina (strain MBIC 11017)</name>
    <dbReference type="NCBI Taxonomy" id="329726"/>
    <lineage>
        <taxon>Bacteria</taxon>
        <taxon>Bacillati</taxon>
        <taxon>Cyanobacteriota</taxon>
        <taxon>Cyanophyceae</taxon>
        <taxon>Acaryochloridales</taxon>
        <taxon>Acaryochloridaceae</taxon>
        <taxon>Acaryochloris</taxon>
    </lineage>
</organism>
<comment type="function">
    <text evidence="1">DNA-dependent RNA polymerase catalyzes the transcription of DNA into RNA using the four ribonucleoside triphosphates as substrates.</text>
</comment>
<comment type="catalytic activity">
    <reaction evidence="1">
        <text>RNA(n) + a ribonucleoside 5'-triphosphate = RNA(n+1) + diphosphate</text>
        <dbReference type="Rhea" id="RHEA:21248"/>
        <dbReference type="Rhea" id="RHEA-COMP:14527"/>
        <dbReference type="Rhea" id="RHEA-COMP:17342"/>
        <dbReference type="ChEBI" id="CHEBI:33019"/>
        <dbReference type="ChEBI" id="CHEBI:61557"/>
        <dbReference type="ChEBI" id="CHEBI:140395"/>
        <dbReference type="EC" id="2.7.7.6"/>
    </reaction>
</comment>
<comment type="cofactor">
    <cofactor evidence="1">
        <name>Mg(2+)</name>
        <dbReference type="ChEBI" id="CHEBI:18420"/>
    </cofactor>
    <text evidence="1">Binds 1 Mg(2+) ion per subunit.</text>
</comment>
<comment type="cofactor">
    <cofactor evidence="1">
        <name>Zn(2+)</name>
        <dbReference type="ChEBI" id="CHEBI:29105"/>
    </cofactor>
    <text evidence="1">Binds 1 Zn(2+) ion per subunit.</text>
</comment>
<comment type="subunit">
    <text evidence="1">In cyanobacteria the RNAP catalytic core is composed of 2 alpha, 1 beta, 1 beta', 1 gamma and 1 omega subunit. When a sigma factor is associated with the core the holoenzyme is formed, which can initiate transcription.</text>
</comment>
<comment type="similarity">
    <text evidence="1">Belongs to the RNA polymerase beta' chain family. RpoC1 subfamily.</text>
</comment>
<sequence>MPKLEQRFDYVKIGLASPERIRQWGERTLPNNQVVGEVTKPETINYRTLKPEMDGLFCERIFGPAKDWECHCGKYKRVRHRGIVCERCGVEVTESRVRRHRMGYIKLAAPVTHVWYLKGIPSYMATLLDMPLRDVEQIVYFNAYVVLDPGNADTLSYKQLLTEDQWIEIEDQIYSEDSQLEGIEVGIGAEAVQRLLQDIKLETEAETLREDIGNAKGQKRAKLIKRLRVIDNFVGTGSQTDWMVLSVIPVIPPDLRPMVQLDGGRFATSDLNDLYRRVINRNNRLARLQEILAPEIIVRNEKRMLQEAVDALIDNGRRGRTVVGANNRPLKSLSDIIEGKQGRFRQNLLGKRVDYSGRSVIVVGPKLKMHQCGLPKEMAIELFQPFVIHRLIGQGLVNNIKAAKRLIQRNDPVIWDVLEEVIEGHPVMLNRAPTLHRLGIQAFEPILVDGRAIQLHPLVCPAFNADFDGDQMAVHVPLSIEAQSEARLLMLASNNILSPATGRPIVTPSQDMVLGAYYLTADNPGRQNGAGKYFAGLDDAIMAYEQQQVDLHAYVWVRFDGPVDDGEDDVEPEVETSADGVVTQTYPSRRIRKDADGTLISQYIRTTPGRIIYNKTIQDSLAS</sequence>
<dbReference type="EC" id="2.7.7.6" evidence="1"/>
<dbReference type="EMBL" id="CP000828">
    <property type="protein sequence ID" value="ABW28583.1"/>
    <property type="molecule type" value="Genomic_DNA"/>
</dbReference>
<dbReference type="RefSeq" id="WP_012163976.1">
    <property type="nucleotide sequence ID" value="NC_009925.1"/>
</dbReference>
<dbReference type="SMR" id="B0C2D1"/>
<dbReference type="STRING" id="329726.AM1_3593"/>
<dbReference type="KEGG" id="amr:AM1_3593"/>
<dbReference type="eggNOG" id="COG0086">
    <property type="taxonomic scope" value="Bacteria"/>
</dbReference>
<dbReference type="HOGENOM" id="CLU_030022_2_0_3"/>
<dbReference type="OrthoDB" id="9815296at2"/>
<dbReference type="Proteomes" id="UP000000268">
    <property type="component" value="Chromosome"/>
</dbReference>
<dbReference type="GO" id="GO:0000428">
    <property type="term" value="C:DNA-directed RNA polymerase complex"/>
    <property type="evidence" value="ECO:0007669"/>
    <property type="project" value="UniProtKB-KW"/>
</dbReference>
<dbReference type="GO" id="GO:0003677">
    <property type="term" value="F:DNA binding"/>
    <property type="evidence" value="ECO:0007669"/>
    <property type="project" value="UniProtKB-UniRule"/>
</dbReference>
<dbReference type="GO" id="GO:0003899">
    <property type="term" value="F:DNA-directed RNA polymerase activity"/>
    <property type="evidence" value="ECO:0007669"/>
    <property type="project" value="UniProtKB-UniRule"/>
</dbReference>
<dbReference type="GO" id="GO:0000287">
    <property type="term" value="F:magnesium ion binding"/>
    <property type="evidence" value="ECO:0007669"/>
    <property type="project" value="UniProtKB-UniRule"/>
</dbReference>
<dbReference type="GO" id="GO:0008270">
    <property type="term" value="F:zinc ion binding"/>
    <property type="evidence" value="ECO:0007669"/>
    <property type="project" value="UniProtKB-UniRule"/>
</dbReference>
<dbReference type="GO" id="GO:0006351">
    <property type="term" value="P:DNA-templated transcription"/>
    <property type="evidence" value="ECO:0007669"/>
    <property type="project" value="UniProtKB-UniRule"/>
</dbReference>
<dbReference type="Gene3D" id="1.10.40.90">
    <property type="match status" value="1"/>
</dbReference>
<dbReference type="Gene3D" id="2.40.40.20">
    <property type="match status" value="1"/>
</dbReference>
<dbReference type="Gene3D" id="4.10.860.120">
    <property type="entry name" value="RNA polymerase II, clamp domain"/>
    <property type="match status" value="1"/>
</dbReference>
<dbReference type="Gene3D" id="1.10.274.100">
    <property type="entry name" value="RNA polymerase Rpb1, domain 3"/>
    <property type="match status" value="1"/>
</dbReference>
<dbReference type="HAMAP" id="MF_01323">
    <property type="entry name" value="RNApol_bact_RpoC1"/>
    <property type="match status" value="1"/>
</dbReference>
<dbReference type="InterPro" id="IPR012755">
    <property type="entry name" value="DNA-dir_RpoC1_gamma"/>
</dbReference>
<dbReference type="InterPro" id="IPR045867">
    <property type="entry name" value="DNA-dir_RpoC_beta_prime"/>
</dbReference>
<dbReference type="InterPro" id="IPR000722">
    <property type="entry name" value="RNA_pol_asu"/>
</dbReference>
<dbReference type="InterPro" id="IPR006592">
    <property type="entry name" value="RNA_pol_N"/>
</dbReference>
<dbReference type="InterPro" id="IPR007080">
    <property type="entry name" value="RNA_pol_Rpb1_1"/>
</dbReference>
<dbReference type="InterPro" id="IPR007066">
    <property type="entry name" value="RNA_pol_Rpb1_3"/>
</dbReference>
<dbReference type="InterPro" id="IPR042102">
    <property type="entry name" value="RNA_pol_Rpb1_3_sf"/>
</dbReference>
<dbReference type="InterPro" id="IPR044893">
    <property type="entry name" value="RNA_pol_Rpb1_clamp_domain"/>
</dbReference>
<dbReference type="InterPro" id="IPR034678">
    <property type="entry name" value="RNApol_RpoC1"/>
</dbReference>
<dbReference type="NCBIfam" id="NF002729">
    <property type="entry name" value="PRK02625.1"/>
    <property type="match status" value="1"/>
</dbReference>
<dbReference type="NCBIfam" id="TIGR02387">
    <property type="entry name" value="rpoC1_cyan"/>
    <property type="match status" value="1"/>
</dbReference>
<dbReference type="PANTHER" id="PTHR19376">
    <property type="entry name" value="DNA-DIRECTED RNA POLYMERASE"/>
    <property type="match status" value="1"/>
</dbReference>
<dbReference type="PANTHER" id="PTHR19376:SF54">
    <property type="entry name" value="DNA-DIRECTED RNA POLYMERASE SUBUNIT BETA"/>
    <property type="match status" value="1"/>
</dbReference>
<dbReference type="Pfam" id="PF04997">
    <property type="entry name" value="RNA_pol_Rpb1_1"/>
    <property type="match status" value="1"/>
</dbReference>
<dbReference type="Pfam" id="PF00623">
    <property type="entry name" value="RNA_pol_Rpb1_2"/>
    <property type="match status" value="2"/>
</dbReference>
<dbReference type="Pfam" id="PF04983">
    <property type="entry name" value="RNA_pol_Rpb1_3"/>
    <property type="match status" value="1"/>
</dbReference>
<dbReference type="SMART" id="SM00663">
    <property type="entry name" value="RPOLA_N"/>
    <property type="match status" value="1"/>
</dbReference>
<dbReference type="SUPFAM" id="SSF64484">
    <property type="entry name" value="beta and beta-prime subunits of DNA dependent RNA-polymerase"/>
    <property type="match status" value="1"/>
</dbReference>
<reference key="1">
    <citation type="journal article" date="2008" name="Proc. Natl. Acad. Sci. U.S.A.">
        <title>Niche adaptation and genome expansion in the chlorophyll d-producing cyanobacterium Acaryochloris marina.</title>
        <authorList>
            <person name="Swingley W.D."/>
            <person name="Chen M."/>
            <person name="Cheung P.C."/>
            <person name="Conrad A.L."/>
            <person name="Dejesa L.C."/>
            <person name="Hao J."/>
            <person name="Honchak B.M."/>
            <person name="Karbach L.E."/>
            <person name="Kurdoglu A."/>
            <person name="Lahiri S."/>
            <person name="Mastrian S.D."/>
            <person name="Miyashita H."/>
            <person name="Page L."/>
            <person name="Ramakrishna P."/>
            <person name="Satoh S."/>
            <person name="Sattley W.M."/>
            <person name="Shimada Y."/>
            <person name="Taylor H.L."/>
            <person name="Tomo T."/>
            <person name="Tsuchiya T."/>
            <person name="Wang Z.T."/>
            <person name="Raymond J."/>
            <person name="Mimuro M."/>
            <person name="Blankenship R.E."/>
            <person name="Touchman J.W."/>
        </authorList>
    </citation>
    <scope>NUCLEOTIDE SEQUENCE [LARGE SCALE GENOMIC DNA]</scope>
    <source>
        <strain>MBIC 11017</strain>
    </source>
</reference>
<accession>B0C2D1</accession>
<keyword id="KW-0240">DNA-directed RNA polymerase</keyword>
<keyword id="KW-0460">Magnesium</keyword>
<keyword id="KW-0479">Metal-binding</keyword>
<keyword id="KW-0548">Nucleotidyltransferase</keyword>
<keyword id="KW-1185">Reference proteome</keyword>
<keyword id="KW-0804">Transcription</keyword>
<keyword id="KW-0808">Transferase</keyword>
<keyword id="KW-0862">Zinc</keyword>
<name>RPOC1_ACAM1</name>
<proteinExistence type="inferred from homology"/>
<gene>
    <name evidence="1" type="primary">rpoC1</name>
    <name type="ordered locus">AM1_3593</name>
</gene>
<protein>
    <recommendedName>
        <fullName evidence="1">DNA-directed RNA polymerase subunit gamma</fullName>
        <shortName evidence="1">RNAP subunit gamma</shortName>
        <ecNumber evidence="1">2.7.7.6</ecNumber>
    </recommendedName>
    <alternativeName>
        <fullName evidence="1">RNA polymerase subunit gamma</fullName>
    </alternativeName>
    <alternativeName>
        <fullName evidence="1">Transcriptase subunit gamma</fullName>
    </alternativeName>
</protein>
<feature type="chain" id="PRO_1000086420" description="DNA-directed RNA polymerase subunit gamma">
    <location>
        <begin position="1"/>
        <end position="623"/>
    </location>
</feature>
<feature type="binding site" evidence="1">
    <location>
        <position position="70"/>
    </location>
    <ligand>
        <name>Zn(2+)</name>
        <dbReference type="ChEBI" id="CHEBI:29105"/>
    </ligand>
</feature>
<feature type="binding site" evidence="1">
    <location>
        <position position="72"/>
    </location>
    <ligand>
        <name>Zn(2+)</name>
        <dbReference type="ChEBI" id="CHEBI:29105"/>
    </ligand>
</feature>
<feature type="binding site" evidence="1">
    <location>
        <position position="85"/>
    </location>
    <ligand>
        <name>Zn(2+)</name>
        <dbReference type="ChEBI" id="CHEBI:29105"/>
    </ligand>
</feature>
<feature type="binding site" evidence="1">
    <location>
        <position position="88"/>
    </location>
    <ligand>
        <name>Zn(2+)</name>
        <dbReference type="ChEBI" id="CHEBI:29105"/>
    </ligand>
</feature>
<feature type="binding site" evidence="1">
    <location>
        <position position="466"/>
    </location>
    <ligand>
        <name>Mg(2+)</name>
        <dbReference type="ChEBI" id="CHEBI:18420"/>
    </ligand>
</feature>
<feature type="binding site" evidence="1">
    <location>
        <position position="468"/>
    </location>
    <ligand>
        <name>Mg(2+)</name>
        <dbReference type="ChEBI" id="CHEBI:18420"/>
    </ligand>
</feature>
<feature type="binding site" evidence="1">
    <location>
        <position position="470"/>
    </location>
    <ligand>
        <name>Mg(2+)</name>
        <dbReference type="ChEBI" id="CHEBI:18420"/>
    </ligand>
</feature>